<feature type="chain" id="PRO_1000055001" description="Small ribosomal subunit protein uS17">
    <location>
        <begin position="1"/>
        <end position="88"/>
    </location>
</feature>
<reference key="1">
    <citation type="submission" date="2007-04" db="EMBL/GenBank/DDBJ databases">
        <title>Complete sequence of Pseudomonas mendocina ymp.</title>
        <authorList>
            <consortium name="US DOE Joint Genome Institute"/>
            <person name="Copeland A."/>
            <person name="Lucas S."/>
            <person name="Lapidus A."/>
            <person name="Barry K."/>
            <person name="Glavina del Rio T."/>
            <person name="Dalin E."/>
            <person name="Tice H."/>
            <person name="Pitluck S."/>
            <person name="Kiss H."/>
            <person name="Brettin T."/>
            <person name="Detter J.C."/>
            <person name="Bruce D."/>
            <person name="Han C."/>
            <person name="Schmutz J."/>
            <person name="Larimer F."/>
            <person name="Land M."/>
            <person name="Hauser L."/>
            <person name="Kyrpides N."/>
            <person name="Mikhailova N."/>
            <person name="Hersman L."/>
            <person name="Dubois J."/>
            <person name="Maurice P."/>
            <person name="Richardson P."/>
        </authorList>
    </citation>
    <scope>NUCLEOTIDE SEQUENCE [LARGE SCALE GENOMIC DNA]</scope>
    <source>
        <strain>ymp</strain>
    </source>
</reference>
<sequence length="88" mass="10119">MAEVEKTVRTLTGRVVSDKMDKTITVLIERRVKHPIYGKYVKRSTKLHAHDESNQCKIGDKVSIRETRPQSKTKSWALVEVVERAVEV</sequence>
<name>RS17_ECTM1</name>
<keyword id="KW-0687">Ribonucleoprotein</keyword>
<keyword id="KW-0689">Ribosomal protein</keyword>
<keyword id="KW-0694">RNA-binding</keyword>
<keyword id="KW-0699">rRNA-binding</keyword>
<protein>
    <recommendedName>
        <fullName evidence="1">Small ribosomal subunit protein uS17</fullName>
    </recommendedName>
    <alternativeName>
        <fullName evidence="2">30S ribosomal protein S17</fullName>
    </alternativeName>
</protein>
<dbReference type="EMBL" id="CP000680">
    <property type="protein sequence ID" value="ABP86647.1"/>
    <property type="molecule type" value="Genomic_DNA"/>
</dbReference>
<dbReference type="SMR" id="A4XZ81"/>
<dbReference type="STRING" id="399739.Pmen_3900"/>
<dbReference type="KEGG" id="pmy:Pmen_3900"/>
<dbReference type="eggNOG" id="COG0186">
    <property type="taxonomic scope" value="Bacteria"/>
</dbReference>
<dbReference type="HOGENOM" id="CLU_073626_1_1_6"/>
<dbReference type="OrthoDB" id="9811714at2"/>
<dbReference type="GO" id="GO:0022627">
    <property type="term" value="C:cytosolic small ribosomal subunit"/>
    <property type="evidence" value="ECO:0007669"/>
    <property type="project" value="TreeGrafter"/>
</dbReference>
<dbReference type="GO" id="GO:0019843">
    <property type="term" value="F:rRNA binding"/>
    <property type="evidence" value="ECO:0007669"/>
    <property type="project" value="UniProtKB-UniRule"/>
</dbReference>
<dbReference type="GO" id="GO:0003735">
    <property type="term" value="F:structural constituent of ribosome"/>
    <property type="evidence" value="ECO:0007669"/>
    <property type="project" value="InterPro"/>
</dbReference>
<dbReference type="GO" id="GO:0006412">
    <property type="term" value="P:translation"/>
    <property type="evidence" value="ECO:0007669"/>
    <property type="project" value="UniProtKB-UniRule"/>
</dbReference>
<dbReference type="CDD" id="cd00364">
    <property type="entry name" value="Ribosomal_uS17"/>
    <property type="match status" value="1"/>
</dbReference>
<dbReference type="FunFam" id="2.40.50.140:FF:000014">
    <property type="entry name" value="30S ribosomal protein S17"/>
    <property type="match status" value="1"/>
</dbReference>
<dbReference type="Gene3D" id="2.40.50.140">
    <property type="entry name" value="Nucleic acid-binding proteins"/>
    <property type="match status" value="1"/>
</dbReference>
<dbReference type="HAMAP" id="MF_01345_B">
    <property type="entry name" value="Ribosomal_uS17_B"/>
    <property type="match status" value="1"/>
</dbReference>
<dbReference type="InterPro" id="IPR012340">
    <property type="entry name" value="NA-bd_OB-fold"/>
</dbReference>
<dbReference type="InterPro" id="IPR000266">
    <property type="entry name" value="Ribosomal_uS17"/>
</dbReference>
<dbReference type="InterPro" id="IPR019984">
    <property type="entry name" value="Ribosomal_uS17_bact/chlr"/>
</dbReference>
<dbReference type="NCBIfam" id="NF004123">
    <property type="entry name" value="PRK05610.1"/>
    <property type="match status" value="1"/>
</dbReference>
<dbReference type="NCBIfam" id="TIGR03635">
    <property type="entry name" value="uS17_bact"/>
    <property type="match status" value="1"/>
</dbReference>
<dbReference type="PANTHER" id="PTHR10744">
    <property type="entry name" value="40S RIBOSOMAL PROTEIN S11 FAMILY MEMBER"/>
    <property type="match status" value="1"/>
</dbReference>
<dbReference type="PANTHER" id="PTHR10744:SF1">
    <property type="entry name" value="SMALL RIBOSOMAL SUBUNIT PROTEIN US17M"/>
    <property type="match status" value="1"/>
</dbReference>
<dbReference type="Pfam" id="PF00366">
    <property type="entry name" value="Ribosomal_S17"/>
    <property type="match status" value="1"/>
</dbReference>
<dbReference type="PRINTS" id="PR00973">
    <property type="entry name" value="RIBOSOMALS17"/>
</dbReference>
<dbReference type="SUPFAM" id="SSF50249">
    <property type="entry name" value="Nucleic acid-binding proteins"/>
    <property type="match status" value="1"/>
</dbReference>
<accession>A4XZ81</accession>
<gene>
    <name evidence="1" type="primary">rpsQ</name>
    <name type="ordered locus">Pmen_3900</name>
</gene>
<comment type="function">
    <text evidence="1">One of the primary rRNA binding proteins, it binds specifically to the 5'-end of 16S ribosomal RNA.</text>
</comment>
<comment type="subunit">
    <text evidence="1">Part of the 30S ribosomal subunit.</text>
</comment>
<comment type="similarity">
    <text evidence="1">Belongs to the universal ribosomal protein uS17 family.</text>
</comment>
<proteinExistence type="inferred from homology"/>
<evidence type="ECO:0000255" key="1">
    <source>
        <dbReference type="HAMAP-Rule" id="MF_01345"/>
    </source>
</evidence>
<evidence type="ECO:0000305" key="2"/>
<organism>
    <name type="scientific">Ectopseudomonas mendocina (strain ymp)</name>
    <name type="common">Pseudomonas mendocina</name>
    <dbReference type="NCBI Taxonomy" id="399739"/>
    <lineage>
        <taxon>Bacteria</taxon>
        <taxon>Pseudomonadati</taxon>
        <taxon>Pseudomonadota</taxon>
        <taxon>Gammaproteobacteria</taxon>
        <taxon>Pseudomonadales</taxon>
        <taxon>Pseudomonadaceae</taxon>
        <taxon>Ectopseudomonas</taxon>
    </lineage>
</organism>